<dbReference type="EMBL" id="CP000378">
    <property type="protein sequence ID" value="ABF76256.1"/>
    <property type="molecule type" value="Genomic_DNA"/>
</dbReference>
<dbReference type="HOGENOM" id="CLU_187346_0_1_4"/>
<dbReference type="GO" id="GO:0005886">
    <property type="term" value="C:plasma membrane"/>
    <property type="evidence" value="ECO:0007669"/>
    <property type="project" value="UniProtKB-SubCell"/>
</dbReference>
<dbReference type="HAMAP" id="MF_01361">
    <property type="entry name" value="UPF0391"/>
    <property type="match status" value="1"/>
</dbReference>
<dbReference type="InterPro" id="IPR009760">
    <property type="entry name" value="DUF1328"/>
</dbReference>
<dbReference type="NCBIfam" id="NF010226">
    <property type="entry name" value="PRK13682.1-1"/>
    <property type="match status" value="1"/>
</dbReference>
<dbReference type="NCBIfam" id="NF010229">
    <property type="entry name" value="PRK13682.1-4"/>
    <property type="match status" value="1"/>
</dbReference>
<dbReference type="Pfam" id="PF07043">
    <property type="entry name" value="DUF1328"/>
    <property type="match status" value="1"/>
</dbReference>
<dbReference type="PIRSF" id="PIRSF036466">
    <property type="entry name" value="UCP036466"/>
    <property type="match status" value="1"/>
</dbReference>
<reference key="1">
    <citation type="submission" date="2006-05" db="EMBL/GenBank/DDBJ databases">
        <title>Complete sequence of chromosome 1 of Burkholderia cenocepacia AU 1054.</title>
        <authorList>
            <consortium name="US DOE Joint Genome Institute"/>
            <person name="Copeland A."/>
            <person name="Lucas S."/>
            <person name="Lapidus A."/>
            <person name="Barry K."/>
            <person name="Detter J.C."/>
            <person name="Glavina del Rio T."/>
            <person name="Hammon N."/>
            <person name="Israni S."/>
            <person name="Dalin E."/>
            <person name="Tice H."/>
            <person name="Pitluck S."/>
            <person name="Chain P."/>
            <person name="Malfatti S."/>
            <person name="Shin M."/>
            <person name="Vergez L."/>
            <person name="Schmutz J."/>
            <person name="Larimer F."/>
            <person name="Land M."/>
            <person name="Hauser L."/>
            <person name="Kyrpides N."/>
            <person name="Lykidis A."/>
            <person name="LiPuma J.J."/>
            <person name="Konstantinidis K."/>
            <person name="Tiedje J.M."/>
            <person name="Richardson P."/>
        </authorList>
    </citation>
    <scope>NUCLEOTIDE SEQUENCE [LARGE SCALE GENOMIC DNA]</scope>
    <source>
        <strain>AU 1054</strain>
    </source>
</reference>
<name>Y1350_BURO1</name>
<evidence type="ECO:0000255" key="1">
    <source>
        <dbReference type="HAMAP-Rule" id="MF_01361"/>
    </source>
</evidence>
<gene>
    <name type="ordered locus">Bcen_1350</name>
</gene>
<keyword id="KW-1003">Cell membrane</keyword>
<keyword id="KW-0472">Membrane</keyword>
<keyword id="KW-0812">Transmembrane</keyword>
<keyword id="KW-1133">Transmembrane helix</keyword>
<comment type="subcellular location">
    <subcellularLocation>
        <location evidence="1">Cell membrane</location>
        <topology evidence="1">Multi-pass membrane protein</topology>
    </subcellularLocation>
</comment>
<comment type="similarity">
    <text evidence="1">Belongs to the UPF0391 family.</text>
</comment>
<sequence length="53" mass="5776">MLRYAIIFFIIAIIAAVFGFGGIAAGAAEIAKILFYIFVVIFLVTLLLGVVRR</sequence>
<accession>Q1BVU9</accession>
<feature type="chain" id="PRO_0000256722" description="UPF0391 membrane protein Bcen_1350">
    <location>
        <begin position="1"/>
        <end position="53"/>
    </location>
</feature>
<feature type="transmembrane region" description="Helical" evidence="1">
    <location>
        <begin position="5"/>
        <end position="25"/>
    </location>
</feature>
<feature type="transmembrane region" description="Helical" evidence="1">
    <location>
        <begin position="30"/>
        <end position="50"/>
    </location>
</feature>
<protein>
    <recommendedName>
        <fullName evidence="1">UPF0391 membrane protein Bcen_1350</fullName>
    </recommendedName>
</protein>
<organism>
    <name type="scientific">Burkholderia orbicola (strain AU 1054)</name>
    <dbReference type="NCBI Taxonomy" id="331271"/>
    <lineage>
        <taxon>Bacteria</taxon>
        <taxon>Pseudomonadati</taxon>
        <taxon>Pseudomonadota</taxon>
        <taxon>Betaproteobacteria</taxon>
        <taxon>Burkholderiales</taxon>
        <taxon>Burkholderiaceae</taxon>
        <taxon>Burkholderia</taxon>
        <taxon>Burkholderia cepacia complex</taxon>
        <taxon>Burkholderia orbicola</taxon>
    </lineage>
</organism>
<proteinExistence type="inferred from homology"/>